<keyword id="KW-0963">Cytoplasm</keyword>
<keyword id="KW-0227">DNA damage</keyword>
<keyword id="KW-0233">DNA recombination</keyword>
<keyword id="KW-0234">DNA repair</keyword>
<keyword id="KW-0238">DNA-binding</keyword>
<reference key="1">
    <citation type="submission" date="2006-08" db="EMBL/GenBank/DDBJ databases">
        <title>Complete sequence of chromosome 1 of Burkholderia cenocepacia HI2424.</title>
        <authorList>
            <person name="Copeland A."/>
            <person name="Lucas S."/>
            <person name="Lapidus A."/>
            <person name="Barry K."/>
            <person name="Detter J.C."/>
            <person name="Glavina del Rio T."/>
            <person name="Hammon N."/>
            <person name="Israni S."/>
            <person name="Pitluck S."/>
            <person name="Chain P."/>
            <person name="Malfatti S."/>
            <person name="Shin M."/>
            <person name="Vergez L."/>
            <person name="Schmutz J."/>
            <person name="Larimer F."/>
            <person name="Land M."/>
            <person name="Hauser L."/>
            <person name="Kyrpides N."/>
            <person name="Kim E."/>
            <person name="LiPuma J.J."/>
            <person name="Gonzalez C.F."/>
            <person name="Konstantinidis K."/>
            <person name="Tiedje J.M."/>
            <person name="Richardson P."/>
        </authorList>
    </citation>
    <scope>NUCLEOTIDE SEQUENCE [LARGE SCALE GENOMIC DNA]</scope>
    <source>
        <strain>HI2424</strain>
    </source>
</reference>
<comment type="function">
    <text evidence="1">The RuvA-RuvB-RuvC complex processes Holliday junction (HJ) DNA during genetic recombination and DNA repair, while the RuvA-RuvB complex plays an important role in the rescue of blocked DNA replication forks via replication fork reversal (RFR). RuvA specifically binds to HJ cruciform DNA, conferring on it an open structure. The RuvB hexamer acts as an ATP-dependent pump, pulling dsDNA into and through the RuvAB complex. HJ branch migration allows RuvC to scan DNA until it finds its consensus sequence, where it cleaves and resolves the cruciform DNA.</text>
</comment>
<comment type="subunit">
    <text evidence="1">Homotetramer. Forms an RuvA(8)-RuvB(12)-Holliday junction (HJ) complex. HJ DNA is sandwiched between 2 RuvA tetramers; dsDNA enters through RuvA and exits via RuvB. An RuvB hexamer assembles on each DNA strand where it exits the tetramer. Each RuvB hexamer is contacted by two RuvA subunits (via domain III) on 2 adjacent RuvB subunits; this complex drives branch migration. In the full resolvosome a probable DNA-RuvA(4)-RuvB(12)-RuvC(2) complex forms which resolves the HJ.</text>
</comment>
<comment type="subcellular location">
    <subcellularLocation>
        <location evidence="1">Cytoplasm</location>
    </subcellularLocation>
</comment>
<comment type="domain">
    <text evidence="1">Has three domains with a flexible linker between the domains II and III and assumes an 'L' shape. Domain III is highly mobile and contacts RuvB.</text>
</comment>
<comment type="similarity">
    <text evidence="1">Belongs to the RuvA family.</text>
</comment>
<gene>
    <name evidence="1" type="primary">ruvA</name>
    <name type="ordered locus">Bcen2424_0689</name>
</gene>
<organism>
    <name type="scientific">Burkholderia cenocepacia (strain HI2424)</name>
    <dbReference type="NCBI Taxonomy" id="331272"/>
    <lineage>
        <taxon>Bacteria</taxon>
        <taxon>Pseudomonadati</taxon>
        <taxon>Pseudomonadota</taxon>
        <taxon>Betaproteobacteria</taxon>
        <taxon>Burkholderiales</taxon>
        <taxon>Burkholderiaceae</taxon>
        <taxon>Burkholderia</taxon>
        <taxon>Burkholderia cepacia complex</taxon>
    </lineage>
</organism>
<evidence type="ECO:0000255" key="1">
    <source>
        <dbReference type="HAMAP-Rule" id="MF_00031"/>
    </source>
</evidence>
<dbReference type="EMBL" id="CP000458">
    <property type="protein sequence ID" value="ABK07442.1"/>
    <property type="molecule type" value="Genomic_DNA"/>
</dbReference>
<dbReference type="RefSeq" id="WP_006401679.1">
    <property type="nucleotide sequence ID" value="NC_008542.1"/>
</dbReference>
<dbReference type="SMR" id="A0K4L5"/>
<dbReference type="GeneID" id="89568971"/>
<dbReference type="KEGG" id="bch:Bcen2424_0689"/>
<dbReference type="HOGENOM" id="CLU_087936_0_0_4"/>
<dbReference type="GO" id="GO:0005737">
    <property type="term" value="C:cytoplasm"/>
    <property type="evidence" value="ECO:0007669"/>
    <property type="project" value="UniProtKB-SubCell"/>
</dbReference>
<dbReference type="GO" id="GO:0009379">
    <property type="term" value="C:Holliday junction helicase complex"/>
    <property type="evidence" value="ECO:0007669"/>
    <property type="project" value="InterPro"/>
</dbReference>
<dbReference type="GO" id="GO:0048476">
    <property type="term" value="C:Holliday junction resolvase complex"/>
    <property type="evidence" value="ECO:0007669"/>
    <property type="project" value="UniProtKB-UniRule"/>
</dbReference>
<dbReference type="GO" id="GO:0005524">
    <property type="term" value="F:ATP binding"/>
    <property type="evidence" value="ECO:0007669"/>
    <property type="project" value="InterPro"/>
</dbReference>
<dbReference type="GO" id="GO:0000400">
    <property type="term" value="F:four-way junction DNA binding"/>
    <property type="evidence" value="ECO:0007669"/>
    <property type="project" value="UniProtKB-UniRule"/>
</dbReference>
<dbReference type="GO" id="GO:0009378">
    <property type="term" value="F:four-way junction helicase activity"/>
    <property type="evidence" value="ECO:0007669"/>
    <property type="project" value="InterPro"/>
</dbReference>
<dbReference type="GO" id="GO:0006310">
    <property type="term" value="P:DNA recombination"/>
    <property type="evidence" value="ECO:0007669"/>
    <property type="project" value="UniProtKB-UniRule"/>
</dbReference>
<dbReference type="GO" id="GO:0006281">
    <property type="term" value="P:DNA repair"/>
    <property type="evidence" value="ECO:0007669"/>
    <property type="project" value="UniProtKB-UniRule"/>
</dbReference>
<dbReference type="CDD" id="cd14332">
    <property type="entry name" value="UBA_RuvA_C"/>
    <property type="match status" value="1"/>
</dbReference>
<dbReference type="Gene3D" id="1.10.150.20">
    <property type="entry name" value="5' to 3' exonuclease, C-terminal subdomain"/>
    <property type="match status" value="1"/>
</dbReference>
<dbReference type="Gene3D" id="1.10.8.10">
    <property type="entry name" value="DNA helicase RuvA subunit, C-terminal domain"/>
    <property type="match status" value="1"/>
</dbReference>
<dbReference type="Gene3D" id="2.40.50.140">
    <property type="entry name" value="Nucleic acid-binding proteins"/>
    <property type="match status" value="1"/>
</dbReference>
<dbReference type="HAMAP" id="MF_00031">
    <property type="entry name" value="DNA_HJ_migration_RuvA"/>
    <property type="match status" value="1"/>
</dbReference>
<dbReference type="InterPro" id="IPR013849">
    <property type="entry name" value="DNA_helicase_Holl-junc_RuvA_I"/>
</dbReference>
<dbReference type="InterPro" id="IPR003583">
    <property type="entry name" value="Hlx-hairpin-Hlx_DNA-bd_motif"/>
</dbReference>
<dbReference type="InterPro" id="IPR012340">
    <property type="entry name" value="NA-bd_OB-fold"/>
</dbReference>
<dbReference type="InterPro" id="IPR000085">
    <property type="entry name" value="RuvA"/>
</dbReference>
<dbReference type="InterPro" id="IPR010994">
    <property type="entry name" value="RuvA_2-like"/>
</dbReference>
<dbReference type="InterPro" id="IPR011114">
    <property type="entry name" value="RuvA_C"/>
</dbReference>
<dbReference type="InterPro" id="IPR036267">
    <property type="entry name" value="RuvA_C_sf"/>
</dbReference>
<dbReference type="NCBIfam" id="TIGR00084">
    <property type="entry name" value="ruvA"/>
    <property type="match status" value="1"/>
</dbReference>
<dbReference type="Pfam" id="PF14520">
    <property type="entry name" value="HHH_5"/>
    <property type="match status" value="1"/>
</dbReference>
<dbReference type="Pfam" id="PF07499">
    <property type="entry name" value="RuvA_C"/>
    <property type="match status" value="1"/>
</dbReference>
<dbReference type="Pfam" id="PF01330">
    <property type="entry name" value="RuvA_N"/>
    <property type="match status" value="1"/>
</dbReference>
<dbReference type="SMART" id="SM00278">
    <property type="entry name" value="HhH1"/>
    <property type="match status" value="2"/>
</dbReference>
<dbReference type="SUPFAM" id="SSF46929">
    <property type="entry name" value="DNA helicase RuvA subunit, C-terminal domain"/>
    <property type="match status" value="1"/>
</dbReference>
<dbReference type="SUPFAM" id="SSF50249">
    <property type="entry name" value="Nucleic acid-binding proteins"/>
    <property type="match status" value="1"/>
</dbReference>
<dbReference type="SUPFAM" id="SSF47781">
    <property type="entry name" value="RuvA domain 2-like"/>
    <property type="match status" value="1"/>
</dbReference>
<sequence>MIGRIAGILLEKNPPHLLVDCNGVGYEIDVPMSTFYNLPQTGERVVLLTQQIVREDAHLLYGFLTPQERTTFRELLKITGIGARMALAVLSGMSVQELAQAVTMQDAARLTRLPGIGKKTAERLLLELKGKLGADLGALAGAASASDHATDILNALLALGYSEKEGLAAIKNVPAGTGVSEGIKLALKALSKA</sequence>
<protein>
    <recommendedName>
        <fullName evidence="1">Holliday junction branch migration complex subunit RuvA</fullName>
    </recommendedName>
</protein>
<accession>A0K4L5</accession>
<proteinExistence type="inferred from homology"/>
<name>RUVA_BURCH</name>
<feature type="chain" id="PRO_1000002409" description="Holliday junction branch migration complex subunit RuvA">
    <location>
        <begin position="1"/>
        <end position="193"/>
    </location>
</feature>
<feature type="region of interest" description="Domain I" evidence="1">
    <location>
        <begin position="1"/>
        <end position="64"/>
    </location>
</feature>
<feature type="region of interest" description="Domain II" evidence="1">
    <location>
        <begin position="65"/>
        <end position="139"/>
    </location>
</feature>
<feature type="region of interest" description="Flexible linker" evidence="1">
    <location>
        <begin position="139"/>
        <end position="143"/>
    </location>
</feature>
<feature type="region of interest" description="Domain III" evidence="1">
    <location>
        <begin position="144"/>
        <end position="193"/>
    </location>
</feature>